<protein>
    <recommendedName>
        <fullName>Intraflagellar transport protein 20 homolog</fullName>
    </recommendedName>
</protein>
<sequence length="132" mass="15339">MARDSLSDAGLHFDELNKLRILDPDVAQQTNELKEECRDFVDKIGHFQKVVGGLIELVDELAKETENEKMKAIGARNLLKSIAKQREAQQQQLYALIAEKKMQLERYRIEYEALCKVEAEQNEFIDQFNLQK</sequence>
<evidence type="ECO:0000250" key="1">
    <source>
        <dbReference type="UniProtKB" id="Q61025"/>
    </source>
</evidence>
<evidence type="ECO:0000255" key="2"/>
<comment type="function">
    <text evidence="1">Involved in ciliary process assembly. May play a role in the trafficking of ciliary membrane proteins from the Golgi complex to the cilium. Regulates the platelet-derived growth factor receptor-alpha (PDGFRA) signaling pathway. Plays an important role in spermatogenesis, particularly spermiogenesis, when germ cells form flagella.</text>
</comment>
<comment type="subcellular location">
    <subcellularLocation>
        <location evidence="1">Golgi apparatus</location>
        <location evidence="1">cis-Golgi network</location>
    </subcellularLocation>
    <subcellularLocation>
        <location evidence="1">Cytoplasm</location>
        <location evidence="1">Cytoskeleton</location>
        <location evidence="1">Microtubule organizing center</location>
        <location evidence="1">Centrosome</location>
        <location evidence="1">Centriole</location>
    </subcellularLocation>
    <subcellularLocation>
        <location evidence="1">Cell projection</location>
        <location evidence="1">Cilium</location>
    </subcellularLocation>
    <subcellularLocation>
        <location evidence="1">Golgi apparatus</location>
    </subcellularLocation>
    <subcellularLocation>
        <location evidence="1">Cytoplasmic vesicle</location>
        <location evidence="1">Secretory vesicle</location>
        <location evidence="1">Acrosome</location>
    </subcellularLocation>
    <subcellularLocation>
        <location evidence="1">Cytoplasm</location>
    </subcellularLocation>
</comment>
<accession>Q66KL7</accession>
<name>IFT20_XENTR</name>
<reference key="1">
    <citation type="submission" date="2006-03" db="EMBL/GenBank/DDBJ databases">
        <authorList>
            <consortium name="Sanger Xenopus tropicalis EST/cDNA project"/>
        </authorList>
    </citation>
    <scope>NUCLEOTIDE SEQUENCE [LARGE SCALE MRNA]</scope>
    <source>
        <tissue>Gastrula</tissue>
    </source>
</reference>
<reference key="2">
    <citation type="submission" date="2004-08" db="EMBL/GenBank/DDBJ databases">
        <authorList>
            <consortium name="NIH - Xenopus Gene Collection (XGC) project"/>
        </authorList>
    </citation>
    <scope>NUCLEOTIDE SEQUENCE [LARGE SCALE MRNA]</scope>
    <source>
        <tissue>Embryo</tissue>
    </source>
</reference>
<proteinExistence type="evidence at transcript level"/>
<feature type="chain" id="PRO_0000249308" description="Intraflagellar transport protein 20 homolog">
    <location>
        <begin position="1"/>
        <end position="132"/>
    </location>
</feature>
<feature type="coiled-coil region" evidence="2">
    <location>
        <begin position="87"/>
        <end position="114"/>
    </location>
</feature>
<dbReference type="EMBL" id="CR762302">
    <property type="protein sequence ID" value="CAJ83749.1"/>
    <property type="molecule type" value="mRNA"/>
</dbReference>
<dbReference type="EMBL" id="BC080338">
    <property type="protein sequence ID" value="AAH80338.1"/>
    <property type="molecule type" value="mRNA"/>
</dbReference>
<dbReference type="RefSeq" id="NP_001007902.1">
    <property type="nucleotide sequence ID" value="NM_001007901.1"/>
</dbReference>
<dbReference type="RefSeq" id="XP_031751749.1">
    <property type="nucleotide sequence ID" value="XM_031895889.1"/>
</dbReference>
<dbReference type="SMR" id="Q66KL7"/>
<dbReference type="FunCoup" id="Q66KL7">
    <property type="interactions" value="227"/>
</dbReference>
<dbReference type="STRING" id="8364.ENSXETP00000054586"/>
<dbReference type="PaxDb" id="8364-ENSXETP00000042122"/>
<dbReference type="DNASU" id="493285"/>
<dbReference type="GeneID" id="493285"/>
<dbReference type="KEGG" id="xtr:493285"/>
<dbReference type="AGR" id="Xenbase:XB-GENE-966387"/>
<dbReference type="CTD" id="90410"/>
<dbReference type="Xenbase" id="XB-GENE-966387">
    <property type="gene designation" value="ift20"/>
</dbReference>
<dbReference type="eggNOG" id="ENOG502RYYR">
    <property type="taxonomic scope" value="Eukaryota"/>
</dbReference>
<dbReference type="HOGENOM" id="CLU_134163_2_0_1"/>
<dbReference type="InParanoid" id="Q66KL7"/>
<dbReference type="OMA" id="TMAKQRQ"/>
<dbReference type="OrthoDB" id="10254896at2759"/>
<dbReference type="PhylomeDB" id="Q66KL7"/>
<dbReference type="Reactome" id="R-XTR-5620924">
    <property type="pathway name" value="Intraflagellar transport"/>
</dbReference>
<dbReference type="Proteomes" id="UP000008143">
    <property type="component" value="Chromosome 2"/>
</dbReference>
<dbReference type="Bgee" id="ENSXETG00000040696">
    <property type="expression patterns" value="Expressed in testis and 13 other cell types or tissues"/>
</dbReference>
<dbReference type="GO" id="GO:0001669">
    <property type="term" value="C:acrosomal vesicle"/>
    <property type="evidence" value="ECO:0000250"/>
    <property type="project" value="UniProtKB"/>
</dbReference>
<dbReference type="GO" id="GO:0005814">
    <property type="term" value="C:centriole"/>
    <property type="evidence" value="ECO:0007669"/>
    <property type="project" value="UniProtKB-SubCell"/>
</dbReference>
<dbReference type="GO" id="GO:0005929">
    <property type="term" value="C:cilium"/>
    <property type="evidence" value="ECO:0000250"/>
    <property type="project" value="UniProtKB"/>
</dbReference>
<dbReference type="GO" id="GO:0005737">
    <property type="term" value="C:cytoplasm"/>
    <property type="evidence" value="ECO:0000250"/>
    <property type="project" value="UniProtKB"/>
</dbReference>
<dbReference type="GO" id="GO:0005794">
    <property type="term" value="C:Golgi apparatus"/>
    <property type="evidence" value="ECO:0000250"/>
    <property type="project" value="UniProtKB"/>
</dbReference>
<dbReference type="GO" id="GO:0030992">
    <property type="term" value="C:intraciliary transport particle B"/>
    <property type="evidence" value="ECO:0000250"/>
    <property type="project" value="UniProtKB"/>
</dbReference>
<dbReference type="GO" id="GO:0030154">
    <property type="term" value="P:cell differentiation"/>
    <property type="evidence" value="ECO:0007669"/>
    <property type="project" value="UniProtKB-KW"/>
</dbReference>
<dbReference type="GO" id="GO:0030030">
    <property type="term" value="P:cell projection organization"/>
    <property type="evidence" value="ECO:0007669"/>
    <property type="project" value="UniProtKB-KW"/>
</dbReference>
<dbReference type="GO" id="GO:2000583">
    <property type="term" value="P:regulation of platelet-derived growth factor receptor-alpha signaling pathway"/>
    <property type="evidence" value="ECO:0000250"/>
    <property type="project" value="UniProtKB"/>
</dbReference>
<dbReference type="GO" id="GO:0007283">
    <property type="term" value="P:spermatogenesis"/>
    <property type="evidence" value="ECO:0000250"/>
    <property type="project" value="UniProtKB"/>
</dbReference>
<dbReference type="InterPro" id="IPR028172">
    <property type="entry name" value="FT20"/>
</dbReference>
<dbReference type="PANTHER" id="PTHR31978">
    <property type="entry name" value="INTRAFLAGELLAR TRANSPORT PROTEIN 20 HOMOLOG"/>
    <property type="match status" value="1"/>
</dbReference>
<dbReference type="PANTHER" id="PTHR31978:SF1">
    <property type="entry name" value="INTRAFLAGELLAR TRANSPORT PROTEIN 20 HOMOLOG"/>
    <property type="match status" value="1"/>
</dbReference>
<dbReference type="Pfam" id="PF14931">
    <property type="entry name" value="IFT20"/>
    <property type="match status" value="1"/>
</dbReference>
<organism>
    <name type="scientific">Xenopus tropicalis</name>
    <name type="common">Western clawed frog</name>
    <name type="synonym">Silurana tropicalis</name>
    <dbReference type="NCBI Taxonomy" id="8364"/>
    <lineage>
        <taxon>Eukaryota</taxon>
        <taxon>Metazoa</taxon>
        <taxon>Chordata</taxon>
        <taxon>Craniata</taxon>
        <taxon>Vertebrata</taxon>
        <taxon>Euteleostomi</taxon>
        <taxon>Amphibia</taxon>
        <taxon>Batrachia</taxon>
        <taxon>Anura</taxon>
        <taxon>Pipoidea</taxon>
        <taxon>Pipidae</taxon>
        <taxon>Xenopodinae</taxon>
        <taxon>Xenopus</taxon>
        <taxon>Silurana</taxon>
    </lineage>
</organism>
<keyword id="KW-0966">Cell projection</keyword>
<keyword id="KW-0970">Cilium biogenesis/degradation</keyword>
<keyword id="KW-0175">Coiled coil</keyword>
<keyword id="KW-0963">Cytoplasm</keyword>
<keyword id="KW-0968">Cytoplasmic vesicle</keyword>
<keyword id="KW-0206">Cytoskeleton</keyword>
<keyword id="KW-0221">Differentiation</keyword>
<keyword id="KW-0333">Golgi apparatus</keyword>
<keyword id="KW-1185">Reference proteome</keyword>
<keyword id="KW-0744">Spermatogenesis</keyword>
<gene>
    <name type="primary">ift20</name>
    <name type="ORF">TGas049d15.1</name>
</gene>